<keyword id="KW-0963">Cytoplasm</keyword>
<keyword id="KW-0342">GTP-binding</keyword>
<keyword id="KW-0396">Initiation factor</keyword>
<keyword id="KW-0547">Nucleotide-binding</keyword>
<keyword id="KW-0648">Protein biosynthesis</keyword>
<keyword id="KW-1185">Reference proteome</keyword>
<name>IF2_DICNV</name>
<evidence type="ECO:0000250" key="1"/>
<evidence type="ECO:0000255" key="2">
    <source>
        <dbReference type="HAMAP-Rule" id="MF_00100"/>
    </source>
</evidence>
<evidence type="ECO:0000256" key="3">
    <source>
        <dbReference type="SAM" id="MobiDB-lite"/>
    </source>
</evidence>
<feature type="chain" id="PRO_0000335466" description="Translation initiation factor IF-2">
    <location>
        <begin position="1"/>
        <end position="879"/>
    </location>
</feature>
<feature type="domain" description="tr-type G">
    <location>
        <begin position="380"/>
        <end position="549"/>
    </location>
</feature>
<feature type="region of interest" description="Disordered" evidence="3">
    <location>
        <begin position="45"/>
        <end position="216"/>
    </location>
</feature>
<feature type="region of interest" description="Disordered" evidence="3">
    <location>
        <begin position="228"/>
        <end position="293"/>
    </location>
</feature>
<feature type="region of interest" description="G1" evidence="1">
    <location>
        <begin position="389"/>
        <end position="396"/>
    </location>
</feature>
<feature type="region of interest" description="G2" evidence="1">
    <location>
        <begin position="414"/>
        <end position="418"/>
    </location>
</feature>
<feature type="region of interest" description="G3" evidence="1">
    <location>
        <begin position="435"/>
        <end position="438"/>
    </location>
</feature>
<feature type="region of interest" description="G4" evidence="1">
    <location>
        <begin position="489"/>
        <end position="492"/>
    </location>
</feature>
<feature type="region of interest" description="G5" evidence="1">
    <location>
        <begin position="525"/>
        <end position="527"/>
    </location>
</feature>
<feature type="compositionally biased region" description="Basic and acidic residues" evidence="3">
    <location>
        <begin position="60"/>
        <end position="72"/>
    </location>
</feature>
<feature type="compositionally biased region" description="Basic and acidic residues" evidence="3">
    <location>
        <begin position="83"/>
        <end position="99"/>
    </location>
</feature>
<feature type="compositionally biased region" description="Basic and acidic residues" evidence="3">
    <location>
        <begin position="107"/>
        <end position="163"/>
    </location>
</feature>
<feature type="compositionally biased region" description="Low complexity" evidence="3">
    <location>
        <begin position="164"/>
        <end position="173"/>
    </location>
</feature>
<feature type="compositionally biased region" description="Basic and acidic residues" evidence="3">
    <location>
        <begin position="174"/>
        <end position="216"/>
    </location>
</feature>
<feature type="compositionally biased region" description="Basic and acidic residues" evidence="3">
    <location>
        <begin position="228"/>
        <end position="271"/>
    </location>
</feature>
<feature type="compositionally biased region" description="Basic and acidic residues" evidence="3">
    <location>
        <begin position="280"/>
        <end position="291"/>
    </location>
</feature>
<feature type="binding site" evidence="2">
    <location>
        <begin position="389"/>
        <end position="396"/>
    </location>
    <ligand>
        <name>GTP</name>
        <dbReference type="ChEBI" id="CHEBI:37565"/>
    </ligand>
</feature>
<feature type="binding site" evidence="2">
    <location>
        <begin position="435"/>
        <end position="439"/>
    </location>
    <ligand>
        <name>GTP</name>
        <dbReference type="ChEBI" id="CHEBI:37565"/>
    </ligand>
</feature>
<feature type="binding site" evidence="2">
    <location>
        <begin position="489"/>
        <end position="492"/>
    </location>
    <ligand>
        <name>GTP</name>
        <dbReference type="ChEBI" id="CHEBI:37565"/>
    </ligand>
</feature>
<protein>
    <recommendedName>
        <fullName evidence="2">Translation initiation factor IF-2</fullName>
    </recommendedName>
</protein>
<comment type="function">
    <text evidence="2">One of the essential components for the initiation of protein synthesis. Protects formylmethionyl-tRNA from spontaneous hydrolysis and promotes its binding to the 30S ribosomal subunits. Also involved in the hydrolysis of GTP during the formation of the 70S ribosomal complex.</text>
</comment>
<comment type="subcellular location">
    <subcellularLocation>
        <location evidence="2">Cytoplasm</location>
    </subcellularLocation>
</comment>
<comment type="similarity">
    <text evidence="2">Belongs to the TRAFAC class translation factor GTPase superfamily. Classic translation factor GTPase family. IF-2 subfamily.</text>
</comment>
<accession>A5EWY9</accession>
<gene>
    <name evidence="2" type="primary">infB</name>
    <name type="ordered locus">DNO_0029</name>
</gene>
<reference key="1">
    <citation type="journal article" date="2007" name="Nat. Biotechnol.">
        <title>Genome sequence and identification of candidate vaccine antigens from the animal pathogen Dichelobacter nodosus.</title>
        <authorList>
            <person name="Myers G.S.A."/>
            <person name="Parker D."/>
            <person name="Al-Hasani K."/>
            <person name="Kennan R.M."/>
            <person name="Seemann T."/>
            <person name="Ren Q."/>
            <person name="Badger J.H."/>
            <person name="Selengut J.D."/>
            <person name="Deboy R.T."/>
            <person name="Tettelin H."/>
            <person name="Boyce J.D."/>
            <person name="McCarl V.P."/>
            <person name="Han X."/>
            <person name="Nelson W.C."/>
            <person name="Madupu R."/>
            <person name="Mohamoud Y."/>
            <person name="Holley T."/>
            <person name="Fedorova N."/>
            <person name="Khouri H."/>
            <person name="Bottomley S.P."/>
            <person name="Whittington R.J."/>
            <person name="Adler B."/>
            <person name="Songer J.G."/>
            <person name="Rood J.I."/>
            <person name="Paulsen I.T."/>
        </authorList>
    </citation>
    <scope>NUCLEOTIDE SEQUENCE [LARGE SCALE GENOMIC DNA]</scope>
    <source>
        <strain>VCS1703A</strain>
    </source>
</reference>
<dbReference type="EMBL" id="CP000513">
    <property type="protein sequence ID" value="ABQ14161.1"/>
    <property type="molecule type" value="Genomic_DNA"/>
</dbReference>
<dbReference type="RefSeq" id="WP_011927788.1">
    <property type="nucleotide sequence ID" value="NC_009446.1"/>
</dbReference>
<dbReference type="SMR" id="A5EWY9"/>
<dbReference type="STRING" id="246195.DNO_0029"/>
<dbReference type="KEGG" id="dno:DNO_0029"/>
<dbReference type="eggNOG" id="COG0532">
    <property type="taxonomic scope" value="Bacteria"/>
</dbReference>
<dbReference type="HOGENOM" id="CLU_006301_6_3_6"/>
<dbReference type="OrthoDB" id="9811804at2"/>
<dbReference type="Proteomes" id="UP000000248">
    <property type="component" value="Chromosome"/>
</dbReference>
<dbReference type="GO" id="GO:0005829">
    <property type="term" value="C:cytosol"/>
    <property type="evidence" value="ECO:0007669"/>
    <property type="project" value="TreeGrafter"/>
</dbReference>
<dbReference type="GO" id="GO:0005525">
    <property type="term" value="F:GTP binding"/>
    <property type="evidence" value="ECO:0007669"/>
    <property type="project" value="UniProtKB-KW"/>
</dbReference>
<dbReference type="GO" id="GO:0003924">
    <property type="term" value="F:GTPase activity"/>
    <property type="evidence" value="ECO:0007669"/>
    <property type="project" value="UniProtKB-UniRule"/>
</dbReference>
<dbReference type="GO" id="GO:0097216">
    <property type="term" value="F:guanosine tetraphosphate binding"/>
    <property type="evidence" value="ECO:0007669"/>
    <property type="project" value="UniProtKB-ARBA"/>
</dbReference>
<dbReference type="GO" id="GO:0003743">
    <property type="term" value="F:translation initiation factor activity"/>
    <property type="evidence" value="ECO:0007669"/>
    <property type="project" value="UniProtKB-UniRule"/>
</dbReference>
<dbReference type="CDD" id="cd01887">
    <property type="entry name" value="IF2_eIF5B"/>
    <property type="match status" value="1"/>
</dbReference>
<dbReference type="CDD" id="cd03702">
    <property type="entry name" value="IF2_mtIF2_II"/>
    <property type="match status" value="1"/>
</dbReference>
<dbReference type="CDD" id="cd03692">
    <property type="entry name" value="mtIF2_IVc"/>
    <property type="match status" value="1"/>
</dbReference>
<dbReference type="FunFam" id="2.40.30.10:FF:000007">
    <property type="entry name" value="Translation initiation factor IF-2"/>
    <property type="match status" value="1"/>
</dbReference>
<dbReference type="FunFam" id="2.40.30.10:FF:000008">
    <property type="entry name" value="Translation initiation factor IF-2"/>
    <property type="match status" value="1"/>
</dbReference>
<dbReference type="FunFam" id="3.40.50.10050:FF:000001">
    <property type="entry name" value="Translation initiation factor IF-2"/>
    <property type="match status" value="1"/>
</dbReference>
<dbReference type="FunFam" id="3.40.50.300:FF:000019">
    <property type="entry name" value="Translation initiation factor IF-2"/>
    <property type="match status" value="1"/>
</dbReference>
<dbReference type="Gene3D" id="3.40.50.300">
    <property type="entry name" value="P-loop containing nucleotide triphosphate hydrolases"/>
    <property type="match status" value="1"/>
</dbReference>
<dbReference type="Gene3D" id="3.30.56.50">
    <property type="entry name" value="Putative DNA-binding domain, N-terminal subdomain of bacterial translation initiation factor IF2"/>
    <property type="match status" value="1"/>
</dbReference>
<dbReference type="Gene3D" id="2.40.30.10">
    <property type="entry name" value="Translation factors"/>
    <property type="match status" value="2"/>
</dbReference>
<dbReference type="Gene3D" id="3.40.50.10050">
    <property type="entry name" value="Translation initiation factor IF- 2, domain 3"/>
    <property type="match status" value="1"/>
</dbReference>
<dbReference type="HAMAP" id="MF_00100_B">
    <property type="entry name" value="IF_2_B"/>
    <property type="match status" value="1"/>
</dbReference>
<dbReference type="InterPro" id="IPR053905">
    <property type="entry name" value="EF-G-like_DII"/>
</dbReference>
<dbReference type="InterPro" id="IPR004161">
    <property type="entry name" value="EFTu-like_2"/>
</dbReference>
<dbReference type="InterPro" id="IPR044145">
    <property type="entry name" value="IF2_II"/>
</dbReference>
<dbReference type="InterPro" id="IPR006847">
    <property type="entry name" value="IF2_N"/>
</dbReference>
<dbReference type="InterPro" id="IPR027417">
    <property type="entry name" value="P-loop_NTPase"/>
</dbReference>
<dbReference type="InterPro" id="IPR005225">
    <property type="entry name" value="Small_GTP-bd"/>
</dbReference>
<dbReference type="InterPro" id="IPR000795">
    <property type="entry name" value="T_Tr_GTP-bd_dom"/>
</dbReference>
<dbReference type="InterPro" id="IPR000178">
    <property type="entry name" value="TF_IF2_bacterial-like"/>
</dbReference>
<dbReference type="InterPro" id="IPR015760">
    <property type="entry name" value="TIF_IF2"/>
</dbReference>
<dbReference type="InterPro" id="IPR023115">
    <property type="entry name" value="TIF_IF2_dom3"/>
</dbReference>
<dbReference type="InterPro" id="IPR036925">
    <property type="entry name" value="TIF_IF2_dom3_sf"/>
</dbReference>
<dbReference type="InterPro" id="IPR009000">
    <property type="entry name" value="Transl_B-barrel_sf"/>
</dbReference>
<dbReference type="NCBIfam" id="TIGR00487">
    <property type="entry name" value="IF-2"/>
    <property type="match status" value="1"/>
</dbReference>
<dbReference type="NCBIfam" id="TIGR00231">
    <property type="entry name" value="small_GTP"/>
    <property type="match status" value="1"/>
</dbReference>
<dbReference type="PANTHER" id="PTHR43381:SF5">
    <property type="entry name" value="TR-TYPE G DOMAIN-CONTAINING PROTEIN"/>
    <property type="match status" value="1"/>
</dbReference>
<dbReference type="PANTHER" id="PTHR43381">
    <property type="entry name" value="TRANSLATION INITIATION FACTOR IF-2-RELATED"/>
    <property type="match status" value="1"/>
</dbReference>
<dbReference type="Pfam" id="PF22042">
    <property type="entry name" value="EF-G_D2"/>
    <property type="match status" value="1"/>
</dbReference>
<dbReference type="Pfam" id="PF00009">
    <property type="entry name" value="GTP_EFTU"/>
    <property type="match status" value="1"/>
</dbReference>
<dbReference type="Pfam" id="PF03144">
    <property type="entry name" value="GTP_EFTU_D2"/>
    <property type="match status" value="1"/>
</dbReference>
<dbReference type="Pfam" id="PF11987">
    <property type="entry name" value="IF-2"/>
    <property type="match status" value="1"/>
</dbReference>
<dbReference type="Pfam" id="PF04760">
    <property type="entry name" value="IF2_N"/>
    <property type="match status" value="1"/>
</dbReference>
<dbReference type="SUPFAM" id="SSF52156">
    <property type="entry name" value="Initiation factor IF2/eIF5b, domain 3"/>
    <property type="match status" value="1"/>
</dbReference>
<dbReference type="SUPFAM" id="SSF52540">
    <property type="entry name" value="P-loop containing nucleoside triphosphate hydrolases"/>
    <property type="match status" value="1"/>
</dbReference>
<dbReference type="SUPFAM" id="SSF50447">
    <property type="entry name" value="Translation proteins"/>
    <property type="match status" value="2"/>
</dbReference>
<dbReference type="PROSITE" id="PS51722">
    <property type="entry name" value="G_TR_2"/>
    <property type="match status" value="1"/>
</dbReference>
<dbReference type="PROSITE" id="PS01176">
    <property type="entry name" value="IF2"/>
    <property type="match status" value="1"/>
</dbReference>
<sequence>MTVAELAKQLRISINRLLDVISEAGIVIHDVENDVLSPEQKVAIAGHMKQRKKQSATEKNAAKSDNKSDKNSKTGAKKTTNRRKTDARKSQSSEKKISPRELAQQLAEKKRLEQGNAQRENEEREYQEALAAEEKRQQQEEARKAKREQKEAEAIRAEEERLQMEAALQAQMQEQERIRQEKEAEEAKLNAEKELRKQQEREKRLAQEKAELERKRQEAIRDVELRESYEEEAETRFHIQSKDRNFGSKNDRSGKRAVKNGDDERSGERRNNARNNTRRRNNDNKKGKFEKPVAPISREVRIPETITVGDLAQKMSVKASELIKTMMKLGSMVTINQLLDQETAALIADEMGHRYVLLKENELEEQVMAQASENKMDVVVRAPVVTIMGHVDHGKTSLLDYIRHTRVVSGEAGGITQHIGAYRVTTERGVITFLDTPGHAAFTAMRARGANVTDIVVLVVAADDGVMPQTKEAIQHAKAANVPLIVAVNKMDKPEADPERVKSELSQEGVISEEWGGEHLFAYVSAKSGMGIDDLLEKILIQAEMLELTAPSSGVGKGVVVESRLDRGRGSVATVLVQSGVMKKGNVMLAGMEYGRIRAMLDEKGKELEEAGPSTPVEILGLSGTPNAGDDVIIVENERKAREIANFRQGKFKEIRIARQQKTKLENLFNNADGEISKVSLMIKADVQGSVEALADSLRELSTDEVAVNIIATGIGGITESDVQLALASSATIIAFNVRAEANAKKLIEEEGGDLRYYSIIYQAIDDVKAAMQGLLSPEIREEIIGLAEVRDVFRSSKFGAVAGCIVEDGLLKRHNPIRVLRNNVVIYEGELESLRRFKDDVNEVRAGTECGLGVKNYNDVRVGDQIECYERVEIERKL</sequence>
<proteinExistence type="inferred from homology"/>
<organism>
    <name type="scientific">Dichelobacter nodosus (strain VCS1703A)</name>
    <dbReference type="NCBI Taxonomy" id="246195"/>
    <lineage>
        <taxon>Bacteria</taxon>
        <taxon>Pseudomonadati</taxon>
        <taxon>Pseudomonadota</taxon>
        <taxon>Gammaproteobacteria</taxon>
        <taxon>Cardiobacteriales</taxon>
        <taxon>Cardiobacteriaceae</taxon>
        <taxon>Dichelobacter</taxon>
    </lineage>
</organism>